<proteinExistence type="evidence at protein level"/>
<organismHost>
    <name type="scientific">Homo sapiens</name>
    <name type="common">Human</name>
    <dbReference type="NCBI Taxonomy" id="9606"/>
</organismHost>
<comment type="function">
    <text>Part of the DNA-dependent RNA polymerase which catalyzes the transcription of viral DNA into RNA using the four ribonucleoside triphosphates as substrates. Responsible for the transcription of early, intermediate and late genes. DNA-dependent RNA polymerase associates with the early transcription factor (ETF), itself composed of D6 and A7, thereby allowing the early genes transcription. Late transcription, and probably also intermediate transcription, require newly synthesized RNA polymerase.</text>
</comment>
<comment type="catalytic activity">
    <reaction>
        <text>RNA(n) + a ribonucleoside 5'-triphosphate = RNA(n+1) + diphosphate</text>
        <dbReference type="Rhea" id="RHEA:21248"/>
        <dbReference type="Rhea" id="RHEA-COMP:14527"/>
        <dbReference type="Rhea" id="RHEA-COMP:17342"/>
        <dbReference type="ChEBI" id="CHEBI:33019"/>
        <dbReference type="ChEBI" id="CHEBI:61557"/>
        <dbReference type="ChEBI" id="CHEBI:140395"/>
        <dbReference type="EC" id="2.7.7.6"/>
    </reaction>
</comment>
<comment type="subunit">
    <text>The DNA-dependent RNA polymerase used for intermediate and late genes expression consists of eight subunits 147 kDa, 133 kDa, 35 kDa, 30 kDa, 22 kDa, 19 kDa, 18 kDa and 7 kDa totalling more than 500 kDa in mass. The same holoenzyme, with the addition of the transcription-specificity factor RAP94, is used for early gene expression.</text>
</comment>
<comment type="subcellular location">
    <subcellularLocation>
        <location evidence="1">Virion</location>
    </subcellularLocation>
    <text>All the enzymes and other proteins required to synthesize early mRNAs are packaged within the virion core along with the DNA genome. This is necessary because viral early mRNAs are synthesized within minutes after virus entry into the cell and are extruded through pores in the core particle.</text>
</comment>
<comment type="similarity">
    <text evidence="1">Belongs to the poxviridae DNA-directed RNA polymerase 35 kDa subunit family.</text>
</comment>
<dbReference type="EC" id="2.7.7.6"/>
<dbReference type="EMBL" id="U94848">
    <property type="protein sequence ID" value="AAB96474.1"/>
    <property type="molecule type" value="Genomic_DNA"/>
</dbReference>
<dbReference type="EMBL" id="AY603355">
    <property type="protein sequence ID" value="AAT10538.1"/>
    <property type="molecule type" value="Genomic_DNA"/>
</dbReference>
<dbReference type="PIR" id="T37415">
    <property type="entry name" value="T37415"/>
</dbReference>
<dbReference type="PDB" id="6RIE">
    <property type="method" value="EM"/>
    <property type="resolution" value="3.10 A"/>
    <property type="chains" value="C=1-305"/>
</dbReference>
<dbReference type="PDBsum" id="6RIE"/>
<dbReference type="SMR" id="O57233"/>
<dbReference type="DNASU" id="3707682"/>
<dbReference type="KEGG" id="vg:3707682"/>
<dbReference type="Proteomes" id="UP000159908">
    <property type="component" value="Segment"/>
</dbReference>
<dbReference type="Proteomes" id="UP000172909">
    <property type="component" value="Segment"/>
</dbReference>
<dbReference type="GO" id="GO:0000428">
    <property type="term" value="C:DNA-directed RNA polymerase complex"/>
    <property type="evidence" value="ECO:0007669"/>
    <property type="project" value="UniProtKB-KW"/>
</dbReference>
<dbReference type="GO" id="GO:0044423">
    <property type="term" value="C:virion component"/>
    <property type="evidence" value="ECO:0007669"/>
    <property type="project" value="UniProtKB-KW"/>
</dbReference>
<dbReference type="GO" id="GO:0003677">
    <property type="term" value="F:DNA binding"/>
    <property type="evidence" value="ECO:0007669"/>
    <property type="project" value="InterPro"/>
</dbReference>
<dbReference type="GO" id="GO:0003899">
    <property type="term" value="F:DNA-directed RNA polymerase activity"/>
    <property type="evidence" value="ECO:0007669"/>
    <property type="project" value="UniProtKB-EC"/>
</dbReference>
<dbReference type="GO" id="GO:0019083">
    <property type="term" value="P:viral transcription"/>
    <property type="evidence" value="ECO:0007669"/>
    <property type="project" value="InterPro"/>
</dbReference>
<dbReference type="InterPro" id="IPR005059">
    <property type="entry name" value="DNA-dir_RNA_pol_35kDa_poxviral"/>
</dbReference>
<dbReference type="Pfam" id="PF03396">
    <property type="entry name" value="Pox_RNA_pol_35"/>
    <property type="match status" value="1"/>
</dbReference>
<dbReference type="PIRSF" id="PIRSF000746">
    <property type="entry name" value="Rpo35"/>
    <property type="match status" value="1"/>
</dbReference>
<accession>O57233</accession>
<accession>Q80HU5</accession>
<sequence>MQHPREENSIVVELEPSLATFIKQGFNNLVKWPLLNIGIVLSNTSTAVNEEWLTAVEHIPTMKIFYKHIHKILTREMGFLVYLKRSQSERDNYITLYDFDYYIIDKDTNSVTMVDKPTELKETLLHVFQEYRLKSSQTIELIAFSSGTVINEDIVSKLTFLDVEVFNREYNNVKTIIDPDFVFRSPFIVISPMGKLTFFVEVYSWFDFKSCFKDIIDFLEGALIANIHNHMIKVGNCDETVSSYNPESGMLFVNDLMTMNIVNFFGCNSRLESYHRFDMTKVDVELFIKALSDACKKILSASNRL</sequence>
<gene>
    <name type="primary">RPO35</name>
    <name type="ordered locus">MVA140L</name>
    <name type="ordered locus">ACAM3000_MVA_140</name>
</gene>
<protein>
    <recommendedName>
        <fullName>DNA-directed RNA polymerase 35 kDa subunit</fullName>
        <ecNumber>2.7.7.6</ecNumber>
    </recommendedName>
</protein>
<feature type="chain" id="PRO_0000099131" description="DNA-directed RNA polymerase 35 kDa subunit">
    <location>
        <begin position="1"/>
        <end position="305"/>
    </location>
</feature>
<feature type="strand" evidence="2">
    <location>
        <begin position="5"/>
        <end position="13"/>
    </location>
</feature>
<feature type="helix" evidence="2">
    <location>
        <begin position="16"/>
        <end position="29"/>
    </location>
</feature>
<feature type="strand" evidence="2">
    <location>
        <begin position="37"/>
        <end position="43"/>
    </location>
</feature>
<feature type="strand" evidence="2">
    <location>
        <begin position="45"/>
        <end position="47"/>
    </location>
</feature>
<feature type="helix" evidence="2">
    <location>
        <begin position="49"/>
        <end position="56"/>
    </location>
</feature>
<feature type="turn" evidence="2">
    <location>
        <begin position="62"/>
        <end position="64"/>
    </location>
</feature>
<feature type="helix" evidence="2">
    <location>
        <begin position="66"/>
        <end position="68"/>
    </location>
</feature>
<feature type="helix" evidence="2">
    <location>
        <begin position="69"/>
        <end position="73"/>
    </location>
</feature>
<feature type="strand" evidence="2">
    <location>
        <begin position="76"/>
        <end position="86"/>
    </location>
</feature>
<feature type="strand" evidence="2">
    <location>
        <begin position="89"/>
        <end position="91"/>
    </location>
</feature>
<feature type="strand" evidence="2">
    <location>
        <begin position="96"/>
        <end position="105"/>
    </location>
</feature>
<feature type="turn" evidence="2">
    <location>
        <begin position="106"/>
        <end position="109"/>
    </location>
</feature>
<feature type="strand" evidence="2">
    <location>
        <begin position="110"/>
        <end position="113"/>
    </location>
</feature>
<feature type="helix" evidence="2">
    <location>
        <begin position="118"/>
        <end position="121"/>
    </location>
</feature>
<feature type="strand" evidence="2">
    <location>
        <begin position="125"/>
        <end position="127"/>
    </location>
</feature>
<feature type="strand" evidence="2">
    <location>
        <begin position="133"/>
        <end position="135"/>
    </location>
</feature>
<feature type="strand" evidence="2">
    <location>
        <begin position="138"/>
        <end position="144"/>
    </location>
</feature>
<feature type="helix" evidence="2">
    <location>
        <begin position="152"/>
        <end position="156"/>
    </location>
</feature>
<feature type="helix" evidence="2">
    <location>
        <begin position="163"/>
        <end position="173"/>
    </location>
</feature>
<feature type="turn" evidence="2">
    <location>
        <begin position="174"/>
        <end position="176"/>
    </location>
</feature>
<feature type="strand" evidence="2">
    <location>
        <begin position="186"/>
        <end position="190"/>
    </location>
</feature>
<feature type="helix" evidence="2">
    <location>
        <begin position="192"/>
        <end position="194"/>
    </location>
</feature>
<feature type="strand" evidence="2">
    <location>
        <begin position="195"/>
        <end position="203"/>
    </location>
</feature>
<feature type="helix" evidence="2">
    <location>
        <begin position="208"/>
        <end position="228"/>
    </location>
</feature>
<feature type="strand" evidence="2">
    <location>
        <begin position="233"/>
        <end position="235"/>
    </location>
</feature>
<feature type="strand" evidence="2">
    <location>
        <begin position="239"/>
        <end position="241"/>
    </location>
</feature>
<feature type="strand" evidence="2">
    <location>
        <begin position="243"/>
        <end position="245"/>
    </location>
</feature>
<feature type="turn" evidence="2">
    <location>
        <begin position="246"/>
        <end position="249"/>
    </location>
</feature>
<feature type="strand" evidence="2">
    <location>
        <begin position="250"/>
        <end position="253"/>
    </location>
</feature>
<feature type="helix" evidence="2">
    <location>
        <begin position="256"/>
        <end position="264"/>
    </location>
</feature>
<feature type="strand" evidence="2">
    <location>
        <begin position="271"/>
        <end position="276"/>
    </location>
</feature>
<feature type="helix" evidence="2">
    <location>
        <begin position="284"/>
        <end position="302"/>
    </location>
</feature>
<evidence type="ECO:0000305" key="1"/>
<evidence type="ECO:0007829" key="2">
    <source>
        <dbReference type="PDB" id="6RIE"/>
    </source>
</evidence>
<reference key="1">
    <citation type="journal article" date="1998" name="Virology">
        <title>The complete genomic sequence of the modified vaccinia Ankara strain: comparison with other orthopoxviruses.</title>
        <authorList>
            <person name="Antoine G."/>
            <person name="Scheiflinger F."/>
            <person name="Dorner F."/>
            <person name="Falkner F.G."/>
        </authorList>
    </citation>
    <scope>NUCLEOTIDE SEQUENCE [LARGE SCALE GENOMIC DNA]</scope>
</reference>
<reference key="2">
    <citation type="submission" date="2004-04" db="EMBL/GenBank/DDBJ databases">
        <authorList>
            <person name="Esposito J.J."/>
            <person name="Frace M."/>
            <person name="Sammons S.A."/>
            <person name="Olsen-Rasmussen M.S."/>
            <person name="Osborne J."/>
            <person name="Khristova M."/>
            <person name="Wohlhueter R.M."/>
        </authorList>
    </citation>
    <scope>NUCLEOTIDE SEQUENCE [LARGE SCALE GENOMIC DNA]</scope>
    <source>
        <strain>Isolate Acambis 3000</strain>
    </source>
</reference>
<reference key="3">
    <citation type="journal article" date="2003" name="J. Gen. Virol.">
        <title>Vaccinia virus transcription.</title>
        <authorList>
            <person name="Broyles S.S."/>
        </authorList>
    </citation>
    <scope>REVIEW</scope>
</reference>
<organism>
    <name type="scientific">Vaccinia virus (strain Ankara)</name>
    <name type="common">VACV</name>
    <dbReference type="NCBI Taxonomy" id="126794"/>
    <lineage>
        <taxon>Viruses</taxon>
        <taxon>Varidnaviria</taxon>
        <taxon>Bamfordvirae</taxon>
        <taxon>Nucleocytoviricota</taxon>
        <taxon>Pokkesviricetes</taxon>
        <taxon>Chitovirales</taxon>
        <taxon>Poxviridae</taxon>
        <taxon>Chordopoxvirinae</taxon>
        <taxon>Orthopoxvirus</taxon>
        <taxon>Vaccinia virus</taxon>
    </lineage>
</organism>
<keyword id="KW-0002">3D-structure</keyword>
<keyword id="KW-0240">DNA-directed RNA polymerase</keyword>
<keyword id="KW-0548">Nucleotidyltransferase</keyword>
<keyword id="KW-0804">Transcription</keyword>
<keyword id="KW-0808">Transferase</keyword>
<keyword id="KW-0946">Virion</keyword>
<name>RP35_VACCA</name>